<comment type="function">
    <text evidence="1">NDH-1 shuttles electrons from NADH, via FMN and iron-sulfur (Fe-S) centers, to quinones in the respiratory chain. The immediate electron acceptor for the enzyme in this species is believed to be a menaquinone. Couples the redox reaction to proton translocation (for every two electrons transferred, four hydrogen ions are translocated across the cytoplasmic membrane), and thus conserves the redox energy in a proton gradient.</text>
</comment>
<comment type="catalytic activity">
    <reaction evidence="1">
        <text>a quinone + NADH + 5 H(+)(in) = a quinol + NAD(+) + 4 H(+)(out)</text>
        <dbReference type="Rhea" id="RHEA:57888"/>
        <dbReference type="ChEBI" id="CHEBI:15378"/>
        <dbReference type="ChEBI" id="CHEBI:24646"/>
        <dbReference type="ChEBI" id="CHEBI:57540"/>
        <dbReference type="ChEBI" id="CHEBI:57945"/>
        <dbReference type="ChEBI" id="CHEBI:132124"/>
    </reaction>
</comment>
<comment type="subunit">
    <text evidence="1">NDH-1 is composed of 14 different subunits. Subunits NuoB, C, D, E, F, and G constitute the peripheral sector of the complex.</text>
</comment>
<comment type="subcellular location">
    <subcellularLocation>
        <location evidence="1">Cell membrane</location>
        <topology evidence="1">Peripheral membrane protein</topology>
        <orientation evidence="1">Cytoplasmic side</orientation>
    </subcellularLocation>
</comment>
<comment type="similarity">
    <text evidence="1">Belongs to the complex I 49 kDa subunit family.</text>
</comment>
<proteinExistence type="inferred from homology"/>
<keyword id="KW-1003">Cell membrane</keyword>
<keyword id="KW-0472">Membrane</keyword>
<keyword id="KW-0520">NAD</keyword>
<keyword id="KW-0874">Quinone</keyword>
<keyword id="KW-1185">Reference proteome</keyword>
<keyword id="KW-1278">Translocase</keyword>
<keyword id="KW-0813">Transport</keyword>
<dbReference type="EC" id="7.1.1.-" evidence="1"/>
<dbReference type="EMBL" id="CP000141">
    <property type="protein sequence ID" value="ABB13710.1"/>
    <property type="molecule type" value="Genomic_DNA"/>
</dbReference>
<dbReference type="RefSeq" id="WP_011344329.1">
    <property type="nucleotide sequence ID" value="NC_007503.1"/>
</dbReference>
<dbReference type="SMR" id="Q3AC80"/>
<dbReference type="STRING" id="246194.CHY_1422"/>
<dbReference type="KEGG" id="chy:CHY_1422"/>
<dbReference type="eggNOG" id="COG0649">
    <property type="taxonomic scope" value="Bacteria"/>
</dbReference>
<dbReference type="HOGENOM" id="CLU_015134_1_2_9"/>
<dbReference type="InParanoid" id="Q3AC80"/>
<dbReference type="OrthoDB" id="9801496at2"/>
<dbReference type="Proteomes" id="UP000002706">
    <property type="component" value="Chromosome"/>
</dbReference>
<dbReference type="GO" id="GO:0005886">
    <property type="term" value="C:plasma membrane"/>
    <property type="evidence" value="ECO:0007669"/>
    <property type="project" value="UniProtKB-SubCell"/>
</dbReference>
<dbReference type="GO" id="GO:0051287">
    <property type="term" value="F:NAD binding"/>
    <property type="evidence" value="ECO:0007669"/>
    <property type="project" value="InterPro"/>
</dbReference>
<dbReference type="GO" id="GO:0050136">
    <property type="term" value="F:NADH:ubiquinone reductase (non-electrogenic) activity"/>
    <property type="evidence" value="ECO:0007669"/>
    <property type="project" value="UniProtKB-UniRule"/>
</dbReference>
<dbReference type="GO" id="GO:0048038">
    <property type="term" value="F:quinone binding"/>
    <property type="evidence" value="ECO:0007669"/>
    <property type="project" value="UniProtKB-KW"/>
</dbReference>
<dbReference type="Gene3D" id="1.10.645.10">
    <property type="entry name" value="Cytochrome-c3 Hydrogenase, chain B"/>
    <property type="match status" value="1"/>
</dbReference>
<dbReference type="HAMAP" id="MF_01358">
    <property type="entry name" value="NDH1_NuoD"/>
    <property type="match status" value="1"/>
</dbReference>
<dbReference type="InterPro" id="IPR001135">
    <property type="entry name" value="NADH_Q_OxRdtase_suD"/>
</dbReference>
<dbReference type="InterPro" id="IPR014029">
    <property type="entry name" value="NADH_UbQ_OxRdtase_49kDa_CS"/>
</dbReference>
<dbReference type="InterPro" id="IPR022885">
    <property type="entry name" value="NDH1_su_D/H"/>
</dbReference>
<dbReference type="InterPro" id="IPR029014">
    <property type="entry name" value="NiFe-Hase_large"/>
</dbReference>
<dbReference type="NCBIfam" id="NF004739">
    <property type="entry name" value="PRK06075.1"/>
    <property type="match status" value="1"/>
</dbReference>
<dbReference type="NCBIfam" id="NF008974">
    <property type="entry name" value="PRK12322.1"/>
    <property type="match status" value="1"/>
</dbReference>
<dbReference type="PANTHER" id="PTHR11993:SF10">
    <property type="entry name" value="NADH DEHYDROGENASE [UBIQUINONE] IRON-SULFUR PROTEIN 2, MITOCHONDRIAL"/>
    <property type="match status" value="1"/>
</dbReference>
<dbReference type="PANTHER" id="PTHR11993">
    <property type="entry name" value="NADH-UBIQUINONE OXIDOREDUCTASE 49 KDA SUBUNIT"/>
    <property type="match status" value="1"/>
</dbReference>
<dbReference type="Pfam" id="PF00346">
    <property type="entry name" value="Complex1_49kDa"/>
    <property type="match status" value="2"/>
</dbReference>
<dbReference type="SUPFAM" id="SSF56762">
    <property type="entry name" value="HydB/Nqo4-like"/>
    <property type="match status" value="1"/>
</dbReference>
<dbReference type="PROSITE" id="PS00535">
    <property type="entry name" value="COMPLEX1_49K"/>
    <property type="match status" value="1"/>
</dbReference>
<gene>
    <name evidence="1" type="primary">nuoD</name>
    <name type="ordered locus">CHY_1422</name>
</gene>
<accession>Q3AC80</accession>
<sequence>MLKTQEISINVGPQHPSTHGVFRIILKLDGETIVDAEPVVGYLHRGIEKLAEDRTYTQVIPYTDRMDYLGAMSYNLGYVQAIEKLMGIEVPERAEFIRVIATELSRIASHHVFLASMSLDMGSYTGWMYPFRDRELVLELLEMLTGSRMTFSFMRIGGVADDLPEGFIEKAKEYLPKILDGVDEEEGLLAGNEIFLARTKGLAPVSVEKALAWGWGGVNLRASGYKFDLRKNRPYSVYDRFEFDIPTGANGDCWDRFYLRLAEIRQSVKIIEQALEMIPEGPIMAKVPKVIKPPVGEVYHEVEAPKGILGYYVVSDGSTKPYRMHVRRPSFINIGMLKELLIGTKLADFITIFASIDVVLGDVDC</sequence>
<feature type="chain" id="PRO_0000357790" description="NADH-quinone oxidoreductase subunit D">
    <location>
        <begin position="1"/>
        <end position="365"/>
    </location>
</feature>
<name>NUOD_CARHZ</name>
<organism>
    <name type="scientific">Carboxydothermus hydrogenoformans (strain ATCC BAA-161 / DSM 6008 / Z-2901)</name>
    <dbReference type="NCBI Taxonomy" id="246194"/>
    <lineage>
        <taxon>Bacteria</taxon>
        <taxon>Bacillati</taxon>
        <taxon>Bacillota</taxon>
        <taxon>Clostridia</taxon>
        <taxon>Thermoanaerobacterales</taxon>
        <taxon>Thermoanaerobacteraceae</taxon>
        <taxon>Carboxydothermus</taxon>
    </lineage>
</organism>
<protein>
    <recommendedName>
        <fullName evidence="1">NADH-quinone oxidoreductase subunit D</fullName>
        <ecNumber evidence="1">7.1.1.-</ecNumber>
    </recommendedName>
    <alternativeName>
        <fullName evidence="1">NADH dehydrogenase I subunit D</fullName>
    </alternativeName>
    <alternativeName>
        <fullName evidence="1">NDH-1 subunit D</fullName>
    </alternativeName>
</protein>
<reference key="1">
    <citation type="journal article" date="2005" name="PLoS Genet.">
        <title>Life in hot carbon monoxide: the complete genome sequence of Carboxydothermus hydrogenoformans Z-2901.</title>
        <authorList>
            <person name="Wu M."/>
            <person name="Ren Q."/>
            <person name="Durkin A.S."/>
            <person name="Daugherty S.C."/>
            <person name="Brinkac L.M."/>
            <person name="Dodson R.J."/>
            <person name="Madupu R."/>
            <person name="Sullivan S.A."/>
            <person name="Kolonay J.F."/>
            <person name="Nelson W.C."/>
            <person name="Tallon L.J."/>
            <person name="Jones K.M."/>
            <person name="Ulrich L.E."/>
            <person name="Gonzalez J.M."/>
            <person name="Zhulin I.B."/>
            <person name="Robb F.T."/>
            <person name="Eisen J.A."/>
        </authorList>
    </citation>
    <scope>NUCLEOTIDE SEQUENCE [LARGE SCALE GENOMIC DNA]</scope>
    <source>
        <strain>ATCC BAA-161 / DSM 6008 / Z-2901</strain>
    </source>
</reference>
<evidence type="ECO:0000255" key="1">
    <source>
        <dbReference type="HAMAP-Rule" id="MF_01358"/>
    </source>
</evidence>